<comment type="catalytic activity">
    <reaction evidence="1">
        <text>CMP + ATP = CDP + ADP</text>
        <dbReference type="Rhea" id="RHEA:11600"/>
        <dbReference type="ChEBI" id="CHEBI:30616"/>
        <dbReference type="ChEBI" id="CHEBI:58069"/>
        <dbReference type="ChEBI" id="CHEBI:60377"/>
        <dbReference type="ChEBI" id="CHEBI:456216"/>
        <dbReference type="EC" id="2.7.4.25"/>
    </reaction>
</comment>
<comment type="catalytic activity">
    <reaction evidence="1">
        <text>dCMP + ATP = dCDP + ADP</text>
        <dbReference type="Rhea" id="RHEA:25094"/>
        <dbReference type="ChEBI" id="CHEBI:30616"/>
        <dbReference type="ChEBI" id="CHEBI:57566"/>
        <dbReference type="ChEBI" id="CHEBI:58593"/>
        <dbReference type="ChEBI" id="CHEBI:456216"/>
        <dbReference type="EC" id="2.7.4.25"/>
    </reaction>
</comment>
<comment type="subcellular location">
    <subcellularLocation>
        <location evidence="1">Cytoplasm</location>
    </subcellularLocation>
</comment>
<comment type="similarity">
    <text evidence="1">Belongs to the cytidylate kinase family. Type 1 subfamily.</text>
</comment>
<gene>
    <name evidence="1" type="primary">cmk</name>
    <name type="ordered locus">PMI0714</name>
</gene>
<reference key="1">
    <citation type="journal article" date="2008" name="J. Bacteriol.">
        <title>Complete genome sequence of uropathogenic Proteus mirabilis, a master of both adherence and motility.</title>
        <authorList>
            <person name="Pearson M.M."/>
            <person name="Sebaihia M."/>
            <person name="Churcher C."/>
            <person name="Quail M.A."/>
            <person name="Seshasayee A.S."/>
            <person name="Luscombe N.M."/>
            <person name="Abdellah Z."/>
            <person name="Arrosmith C."/>
            <person name="Atkin B."/>
            <person name="Chillingworth T."/>
            <person name="Hauser H."/>
            <person name="Jagels K."/>
            <person name="Moule S."/>
            <person name="Mungall K."/>
            <person name="Norbertczak H."/>
            <person name="Rabbinowitsch E."/>
            <person name="Walker D."/>
            <person name="Whithead S."/>
            <person name="Thomson N.R."/>
            <person name="Rather P.N."/>
            <person name="Parkhill J."/>
            <person name="Mobley H.L.T."/>
        </authorList>
    </citation>
    <scope>NUCLEOTIDE SEQUENCE [LARGE SCALE GENOMIC DNA]</scope>
    <source>
        <strain>HI4320</strain>
    </source>
</reference>
<organism>
    <name type="scientific">Proteus mirabilis (strain HI4320)</name>
    <dbReference type="NCBI Taxonomy" id="529507"/>
    <lineage>
        <taxon>Bacteria</taxon>
        <taxon>Pseudomonadati</taxon>
        <taxon>Pseudomonadota</taxon>
        <taxon>Gammaproteobacteria</taxon>
        <taxon>Enterobacterales</taxon>
        <taxon>Morganellaceae</taxon>
        <taxon>Proteus</taxon>
    </lineage>
</organism>
<sequence>MAVIVPVITVDGPSGAGKGTLCQALAKAFGWHLLDSGAIYRVLALAALHHHVDITSEDALVPLAANLDVRFIPNENGLSVILEGEDVSTEIRTETVGNTASQAATFPRVREALLRRQRAFRTAPGLIADGRDMGTIVFPDAQVKIFLDASAQERARRRMLQLQEKGFNVNFERLLSEIKERDYRDRNRAVAPLVAAKDALILDSTSLSIDEVIEKSLAYAKKICN</sequence>
<dbReference type="EC" id="2.7.4.25" evidence="1"/>
<dbReference type="EMBL" id="AM942759">
    <property type="protein sequence ID" value="CAR41668.1"/>
    <property type="molecule type" value="Genomic_DNA"/>
</dbReference>
<dbReference type="RefSeq" id="WP_004244585.1">
    <property type="nucleotide sequence ID" value="NC_010554.1"/>
</dbReference>
<dbReference type="SMR" id="B4ET26"/>
<dbReference type="EnsemblBacteria" id="CAR41668">
    <property type="protein sequence ID" value="CAR41668"/>
    <property type="gene ID" value="PMI0714"/>
</dbReference>
<dbReference type="GeneID" id="6801379"/>
<dbReference type="KEGG" id="pmr:PMI0714"/>
<dbReference type="eggNOG" id="COG0283">
    <property type="taxonomic scope" value="Bacteria"/>
</dbReference>
<dbReference type="HOGENOM" id="CLU_079959_2_0_6"/>
<dbReference type="Proteomes" id="UP000008319">
    <property type="component" value="Chromosome"/>
</dbReference>
<dbReference type="GO" id="GO:0005829">
    <property type="term" value="C:cytosol"/>
    <property type="evidence" value="ECO:0007669"/>
    <property type="project" value="TreeGrafter"/>
</dbReference>
<dbReference type="GO" id="GO:0005524">
    <property type="term" value="F:ATP binding"/>
    <property type="evidence" value="ECO:0007669"/>
    <property type="project" value="UniProtKB-UniRule"/>
</dbReference>
<dbReference type="GO" id="GO:0036430">
    <property type="term" value="F:CMP kinase activity"/>
    <property type="evidence" value="ECO:0007669"/>
    <property type="project" value="RHEA"/>
</dbReference>
<dbReference type="GO" id="GO:0036431">
    <property type="term" value="F:dCMP kinase activity"/>
    <property type="evidence" value="ECO:0007669"/>
    <property type="project" value="RHEA"/>
</dbReference>
<dbReference type="GO" id="GO:0015949">
    <property type="term" value="P:nucleobase-containing small molecule interconversion"/>
    <property type="evidence" value="ECO:0007669"/>
    <property type="project" value="TreeGrafter"/>
</dbReference>
<dbReference type="GO" id="GO:0006220">
    <property type="term" value="P:pyrimidine nucleotide metabolic process"/>
    <property type="evidence" value="ECO:0007669"/>
    <property type="project" value="UniProtKB-UniRule"/>
</dbReference>
<dbReference type="CDD" id="cd02020">
    <property type="entry name" value="CMPK"/>
    <property type="match status" value="1"/>
</dbReference>
<dbReference type="FunFam" id="3.40.50.300:FF:000262">
    <property type="entry name" value="Cytidylate kinase"/>
    <property type="match status" value="1"/>
</dbReference>
<dbReference type="Gene3D" id="3.40.50.300">
    <property type="entry name" value="P-loop containing nucleotide triphosphate hydrolases"/>
    <property type="match status" value="1"/>
</dbReference>
<dbReference type="HAMAP" id="MF_00238">
    <property type="entry name" value="Cytidyl_kinase_type1"/>
    <property type="match status" value="1"/>
</dbReference>
<dbReference type="InterPro" id="IPR003136">
    <property type="entry name" value="Cytidylate_kin"/>
</dbReference>
<dbReference type="InterPro" id="IPR011994">
    <property type="entry name" value="Cytidylate_kinase_dom"/>
</dbReference>
<dbReference type="InterPro" id="IPR027417">
    <property type="entry name" value="P-loop_NTPase"/>
</dbReference>
<dbReference type="NCBIfam" id="TIGR00017">
    <property type="entry name" value="cmk"/>
    <property type="match status" value="1"/>
</dbReference>
<dbReference type="PANTHER" id="PTHR21299:SF2">
    <property type="entry name" value="CYTIDYLATE KINASE"/>
    <property type="match status" value="1"/>
</dbReference>
<dbReference type="PANTHER" id="PTHR21299">
    <property type="entry name" value="CYTIDYLATE KINASE/PANTOATE-BETA-ALANINE LIGASE"/>
    <property type="match status" value="1"/>
</dbReference>
<dbReference type="Pfam" id="PF02224">
    <property type="entry name" value="Cytidylate_kin"/>
    <property type="match status" value="1"/>
</dbReference>
<dbReference type="SUPFAM" id="SSF52540">
    <property type="entry name" value="P-loop containing nucleoside triphosphate hydrolases"/>
    <property type="match status" value="1"/>
</dbReference>
<name>KCY_PROMH</name>
<protein>
    <recommendedName>
        <fullName evidence="1">Cytidylate kinase</fullName>
        <shortName evidence="1">CK</shortName>
        <ecNumber evidence="1">2.7.4.25</ecNumber>
    </recommendedName>
    <alternativeName>
        <fullName evidence="1">Cytidine monophosphate kinase</fullName>
        <shortName evidence="1">CMP kinase</shortName>
    </alternativeName>
</protein>
<proteinExistence type="inferred from homology"/>
<feature type="chain" id="PRO_1000100674" description="Cytidylate kinase">
    <location>
        <begin position="1"/>
        <end position="225"/>
    </location>
</feature>
<feature type="binding site" evidence="1">
    <location>
        <begin position="12"/>
        <end position="20"/>
    </location>
    <ligand>
        <name>ATP</name>
        <dbReference type="ChEBI" id="CHEBI:30616"/>
    </ligand>
</feature>
<keyword id="KW-0067">ATP-binding</keyword>
<keyword id="KW-0963">Cytoplasm</keyword>
<keyword id="KW-0418">Kinase</keyword>
<keyword id="KW-0547">Nucleotide-binding</keyword>
<keyword id="KW-1185">Reference proteome</keyword>
<keyword id="KW-0808">Transferase</keyword>
<evidence type="ECO:0000255" key="1">
    <source>
        <dbReference type="HAMAP-Rule" id="MF_00238"/>
    </source>
</evidence>
<accession>B4ET26</accession>